<reference key="1">
    <citation type="journal article" date="1996" name="Theor. Appl. Genet.">
        <title>The maize two dimensional gel protein database: towards an integrated genome analysis program.</title>
        <authorList>
            <person name="Touzet P."/>
            <person name="Riccardi F."/>
            <person name="Morin C."/>
            <person name="Damerval C."/>
            <person name="Huet J.-C."/>
            <person name="Pernollet J.-C."/>
            <person name="Zivy M."/>
            <person name="de Vienne D."/>
        </authorList>
        <dbReference type="AGRICOLA" id="IND20551642"/>
    </citation>
    <scope>PROTEIN SEQUENCE</scope>
    <source>
        <tissue>Coleoptile</tissue>
    </source>
</reference>
<accession>P80623</accession>
<keyword id="KW-0903">Direct protein sequencing</keyword>
<keyword id="KW-1185">Reference proteome</keyword>
<proteinExistence type="evidence at protein level"/>
<feature type="chain" id="PRO_0000055513" description="Unknown protein from spot 32 of 2D-PAGE of etiolated coleoptile">
    <location>
        <begin position="1" status="less than"/>
        <end position="15" status="greater than"/>
    </location>
</feature>
<feature type="non-terminal residue">
    <location>
        <position position="1"/>
    </location>
</feature>
<feature type="non-terminal residue">
    <location>
        <position position="15"/>
    </location>
</feature>
<comment type="miscellaneous">
    <text>On the 2D-gel the determined pI of this unknown protein is: 5.5, its MW is: 42.7 kDa.</text>
</comment>
<organism>
    <name type="scientific">Zea mays</name>
    <name type="common">Maize</name>
    <dbReference type="NCBI Taxonomy" id="4577"/>
    <lineage>
        <taxon>Eukaryota</taxon>
        <taxon>Viridiplantae</taxon>
        <taxon>Streptophyta</taxon>
        <taxon>Embryophyta</taxon>
        <taxon>Tracheophyta</taxon>
        <taxon>Spermatophyta</taxon>
        <taxon>Magnoliopsida</taxon>
        <taxon>Liliopsida</taxon>
        <taxon>Poales</taxon>
        <taxon>Poaceae</taxon>
        <taxon>PACMAD clade</taxon>
        <taxon>Panicoideae</taxon>
        <taxon>Andropogonodae</taxon>
        <taxon>Andropogoneae</taxon>
        <taxon>Tripsacinae</taxon>
        <taxon>Zea</taxon>
    </lineage>
</organism>
<sequence>ALSVPVFAVAPLNKK</sequence>
<protein>
    <recommendedName>
        <fullName>Unknown protein from spot 32 of 2D-PAGE of etiolated coleoptile</fullName>
    </recommendedName>
</protein>
<dbReference type="MaizeGDB" id="123949"/>
<dbReference type="InParanoid" id="P80623"/>
<dbReference type="Proteomes" id="UP000007305">
    <property type="component" value="Unplaced"/>
</dbReference>
<name>UC17_MAIZE</name>